<feature type="chain" id="PRO_1000080156" description="Small ribosomal subunit protein bS16">
    <location>
        <begin position="1"/>
        <end position="131"/>
    </location>
</feature>
<feature type="region of interest" description="Disordered" evidence="2">
    <location>
        <begin position="87"/>
        <end position="131"/>
    </location>
</feature>
<feature type="compositionally biased region" description="Low complexity" evidence="2">
    <location>
        <begin position="111"/>
        <end position="131"/>
    </location>
</feature>
<evidence type="ECO:0000255" key="1">
    <source>
        <dbReference type="HAMAP-Rule" id="MF_00385"/>
    </source>
</evidence>
<evidence type="ECO:0000256" key="2">
    <source>
        <dbReference type="SAM" id="MobiDB-lite"/>
    </source>
</evidence>
<evidence type="ECO:0000305" key="3"/>
<organism>
    <name type="scientific">Kineococcus radiotolerans (strain ATCC BAA-149 / DSM 14245 / SRS30216)</name>
    <dbReference type="NCBI Taxonomy" id="266940"/>
    <lineage>
        <taxon>Bacteria</taxon>
        <taxon>Bacillati</taxon>
        <taxon>Actinomycetota</taxon>
        <taxon>Actinomycetes</taxon>
        <taxon>Kineosporiales</taxon>
        <taxon>Kineosporiaceae</taxon>
        <taxon>Kineococcus</taxon>
    </lineage>
</organism>
<comment type="similarity">
    <text evidence="1">Belongs to the bacterial ribosomal protein bS16 family.</text>
</comment>
<sequence length="131" mass="14162">MAVKIRLKRMGQIRAPFYRIVVADSRNKRDGRSIEEIGLYNPMTDPSTIEVKSERVQYWLGVGAQPTEQVAALLKVTGDWQKFKGLPGAEGTYRVPTANTKPPRIPGGGAAKAVEAPAEAPAEAETPASES</sequence>
<protein>
    <recommendedName>
        <fullName evidence="1">Small ribosomal subunit protein bS16</fullName>
    </recommendedName>
    <alternativeName>
        <fullName evidence="3">30S ribosomal protein S16</fullName>
    </alternativeName>
</protein>
<dbReference type="EMBL" id="CP000750">
    <property type="protein sequence ID" value="ABS02886.1"/>
    <property type="molecule type" value="Genomic_DNA"/>
</dbReference>
<dbReference type="RefSeq" id="WP_011981975.1">
    <property type="nucleotide sequence ID" value="NC_009664.2"/>
</dbReference>
<dbReference type="SMR" id="A6W7U7"/>
<dbReference type="STRING" id="266940.Krad_1398"/>
<dbReference type="KEGG" id="kra:Krad_1398"/>
<dbReference type="eggNOG" id="COG0228">
    <property type="taxonomic scope" value="Bacteria"/>
</dbReference>
<dbReference type="HOGENOM" id="CLU_100590_1_1_11"/>
<dbReference type="OrthoDB" id="9807878at2"/>
<dbReference type="Proteomes" id="UP000001116">
    <property type="component" value="Chromosome"/>
</dbReference>
<dbReference type="GO" id="GO:0005737">
    <property type="term" value="C:cytoplasm"/>
    <property type="evidence" value="ECO:0007669"/>
    <property type="project" value="UniProtKB-ARBA"/>
</dbReference>
<dbReference type="GO" id="GO:0015935">
    <property type="term" value="C:small ribosomal subunit"/>
    <property type="evidence" value="ECO:0007669"/>
    <property type="project" value="TreeGrafter"/>
</dbReference>
<dbReference type="GO" id="GO:0003735">
    <property type="term" value="F:structural constituent of ribosome"/>
    <property type="evidence" value="ECO:0007669"/>
    <property type="project" value="InterPro"/>
</dbReference>
<dbReference type="GO" id="GO:0006412">
    <property type="term" value="P:translation"/>
    <property type="evidence" value="ECO:0007669"/>
    <property type="project" value="UniProtKB-UniRule"/>
</dbReference>
<dbReference type="Gene3D" id="3.30.1320.10">
    <property type="match status" value="1"/>
</dbReference>
<dbReference type="HAMAP" id="MF_00385">
    <property type="entry name" value="Ribosomal_bS16"/>
    <property type="match status" value="1"/>
</dbReference>
<dbReference type="InterPro" id="IPR000307">
    <property type="entry name" value="Ribosomal_bS16"/>
</dbReference>
<dbReference type="InterPro" id="IPR023803">
    <property type="entry name" value="Ribosomal_bS16_dom_sf"/>
</dbReference>
<dbReference type="NCBIfam" id="NF011093">
    <property type="entry name" value="PRK14520.1"/>
    <property type="match status" value="1"/>
</dbReference>
<dbReference type="NCBIfam" id="TIGR00002">
    <property type="entry name" value="S16"/>
    <property type="match status" value="1"/>
</dbReference>
<dbReference type="PANTHER" id="PTHR12919">
    <property type="entry name" value="30S RIBOSOMAL PROTEIN S16"/>
    <property type="match status" value="1"/>
</dbReference>
<dbReference type="PANTHER" id="PTHR12919:SF20">
    <property type="entry name" value="SMALL RIBOSOMAL SUBUNIT PROTEIN BS16M"/>
    <property type="match status" value="1"/>
</dbReference>
<dbReference type="Pfam" id="PF00886">
    <property type="entry name" value="Ribosomal_S16"/>
    <property type="match status" value="1"/>
</dbReference>
<dbReference type="SUPFAM" id="SSF54565">
    <property type="entry name" value="Ribosomal protein S16"/>
    <property type="match status" value="1"/>
</dbReference>
<gene>
    <name evidence="1" type="primary">rpsP</name>
    <name type="ordered locus">Krad_1398</name>
</gene>
<keyword id="KW-1185">Reference proteome</keyword>
<keyword id="KW-0687">Ribonucleoprotein</keyword>
<keyword id="KW-0689">Ribosomal protein</keyword>
<name>RS16_KINRD</name>
<accession>A6W7U7</accession>
<proteinExistence type="inferred from homology"/>
<reference key="1">
    <citation type="journal article" date="2008" name="PLoS ONE">
        <title>Survival in nuclear waste, extreme resistance, and potential applications gleaned from the genome sequence of Kineococcus radiotolerans SRS30216.</title>
        <authorList>
            <person name="Bagwell C.E."/>
            <person name="Bhat S."/>
            <person name="Hawkins G.M."/>
            <person name="Smith B.W."/>
            <person name="Biswas T."/>
            <person name="Hoover T.R."/>
            <person name="Saunders E."/>
            <person name="Han C.S."/>
            <person name="Tsodikov O.V."/>
            <person name="Shimkets L.J."/>
        </authorList>
    </citation>
    <scope>NUCLEOTIDE SEQUENCE [LARGE SCALE GENOMIC DNA]</scope>
    <source>
        <strain>ATCC BAA-149 / DSM 14245 / SRS30216</strain>
    </source>
</reference>